<reference key="1">
    <citation type="submission" date="2008-05" db="EMBL/GenBank/DDBJ databases">
        <title>Complete genome sequence of Clostridium botulinum E3 str. Alaska E43.</title>
        <authorList>
            <person name="Brinkac L.M."/>
            <person name="Brown J.L."/>
            <person name="Bruce D."/>
            <person name="Detter C."/>
            <person name="Munk C."/>
            <person name="Smith L.A."/>
            <person name="Smith T.J."/>
            <person name="Sutton G."/>
            <person name="Brettin T.S."/>
        </authorList>
    </citation>
    <scope>NUCLEOTIDE SEQUENCE [LARGE SCALE GENOMIC DNA]</scope>
    <source>
        <strain>Alaska E43 / Type E3</strain>
    </source>
</reference>
<sequence length="592" mass="65035">MKTGKIIKVSGPLVVAEGMDEANIYDVCKVGEKGLIGEIIEMRGDKASIQVYEETSGIGPGDPVVTTGEPLSVELGPGLIESMFDGIQRPLDAFMEAAKSSFLTRGVSVPSLNREKKWDFKPTAKVGDEVKSGDVIGTVQETPVVEQRIMIPIGIEGKIKEINAGSFTVTETIAIVETEKGDREVQLMQKWPVRKGRPYSAKINPVEPMLTGQRVIDTFFPVAKGGAAAIPGPFGAGKTVTQHQIAKWGDAEIVVYVGCGERGNEMTDVVNEFPELIDPKTGESLMKRTVLIANTSNMPVAAREASIYTGITIAEYFRDMGYAVSIMADSTSRWAEALREMSGRLEEMPGDEGYPAYLGSRLADYYERAGKVECLGNDGRIGSITAIGAVSPPGGDISEPVSQSTLRIVKVFWGLDAQLAYQRHFPTINWLTSYSLYADTIDKWMNGNVAENWGALRLEAMTILQDEAQLQEIVRLVGIDALSEKDRLKLDVAKSIREDYLQQNGFHEIDTYTSLKKQYKMLSLILGYRKEAERALEAGVYLNDILAMEDLKDRIARSKYIHEDDLEKMDQIVVDLKNAIDNLINKGGVANA</sequence>
<gene>
    <name evidence="1" type="primary">atpA</name>
    <name type="ordered locus">CLH_2589</name>
</gene>
<dbReference type="EC" id="7.1.2.2" evidence="1"/>
<dbReference type="EMBL" id="CP001078">
    <property type="protein sequence ID" value="ACD51359.1"/>
    <property type="molecule type" value="Genomic_DNA"/>
</dbReference>
<dbReference type="RefSeq" id="WP_003372165.1">
    <property type="nucleotide sequence ID" value="NC_010723.1"/>
</dbReference>
<dbReference type="SMR" id="B2UWY4"/>
<dbReference type="KEGG" id="cbt:CLH_2589"/>
<dbReference type="HOGENOM" id="CLU_008162_3_1_9"/>
<dbReference type="GO" id="GO:0045259">
    <property type="term" value="C:proton-transporting ATP synthase complex"/>
    <property type="evidence" value="ECO:0007669"/>
    <property type="project" value="UniProtKB-ARBA"/>
</dbReference>
<dbReference type="GO" id="GO:0005524">
    <property type="term" value="F:ATP binding"/>
    <property type="evidence" value="ECO:0007669"/>
    <property type="project" value="UniProtKB-UniRule"/>
</dbReference>
<dbReference type="GO" id="GO:0046933">
    <property type="term" value="F:proton-transporting ATP synthase activity, rotational mechanism"/>
    <property type="evidence" value="ECO:0007669"/>
    <property type="project" value="UniProtKB-UniRule"/>
</dbReference>
<dbReference type="GO" id="GO:0046961">
    <property type="term" value="F:proton-transporting ATPase activity, rotational mechanism"/>
    <property type="evidence" value="ECO:0007669"/>
    <property type="project" value="InterPro"/>
</dbReference>
<dbReference type="GO" id="GO:0042777">
    <property type="term" value="P:proton motive force-driven plasma membrane ATP synthesis"/>
    <property type="evidence" value="ECO:0007669"/>
    <property type="project" value="UniProtKB-UniRule"/>
</dbReference>
<dbReference type="CDD" id="cd18111">
    <property type="entry name" value="ATP-synt_V_A-type_alpha_C"/>
    <property type="match status" value="1"/>
</dbReference>
<dbReference type="CDD" id="cd18119">
    <property type="entry name" value="ATP-synt_V_A-type_alpha_N"/>
    <property type="match status" value="1"/>
</dbReference>
<dbReference type="CDD" id="cd01134">
    <property type="entry name" value="V_A-ATPase_A"/>
    <property type="match status" value="1"/>
</dbReference>
<dbReference type="FunFam" id="2.40.30.20:FF:000002">
    <property type="entry name" value="V-type proton ATPase catalytic subunit A"/>
    <property type="match status" value="1"/>
</dbReference>
<dbReference type="FunFam" id="2.40.50.100:FF:000008">
    <property type="entry name" value="V-type proton ATPase catalytic subunit A"/>
    <property type="match status" value="1"/>
</dbReference>
<dbReference type="Gene3D" id="2.40.30.20">
    <property type="match status" value="1"/>
</dbReference>
<dbReference type="Gene3D" id="2.40.50.100">
    <property type="match status" value="1"/>
</dbReference>
<dbReference type="Gene3D" id="1.10.1140.10">
    <property type="entry name" value="Bovine Mitochondrial F1-atpase, Atp Synthase Beta Chain, Chain D, domain 3"/>
    <property type="match status" value="1"/>
</dbReference>
<dbReference type="Gene3D" id="3.40.50.300">
    <property type="entry name" value="P-loop containing nucleotide triphosphate hydrolases"/>
    <property type="match status" value="1"/>
</dbReference>
<dbReference type="HAMAP" id="MF_00309">
    <property type="entry name" value="ATP_synth_A_arch"/>
    <property type="match status" value="1"/>
</dbReference>
<dbReference type="InterPro" id="IPR055190">
    <property type="entry name" value="ATP-synt_VA_C"/>
</dbReference>
<dbReference type="InterPro" id="IPR031686">
    <property type="entry name" value="ATP-synth_a_Xtn"/>
</dbReference>
<dbReference type="InterPro" id="IPR023366">
    <property type="entry name" value="ATP_synth_asu-like_sf"/>
</dbReference>
<dbReference type="InterPro" id="IPR004100">
    <property type="entry name" value="ATPase_F1/V1/A1_a/bsu_N"/>
</dbReference>
<dbReference type="InterPro" id="IPR036121">
    <property type="entry name" value="ATPase_F1/V1/A1_a/bsu_N_sf"/>
</dbReference>
<dbReference type="InterPro" id="IPR000194">
    <property type="entry name" value="ATPase_F1/V1/A1_a/bsu_nucl-bd"/>
</dbReference>
<dbReference type="InterPro" id="IPR024034">
    <property type="entry name" value="ATPase_F1/V1_b/a_C"/>
</dbReference>
<dbReference type="InterPro" id="IPR027417">
    <property type="entry name" value="P-loop_NTPase"/>
</dbReference>
<dbReference type="InterPro" id="IPR022878">
    <property type="entry name" value="V-ATPase_asu"/>
</dbReference>
<dbReference type="NCBIfam" id="NF003220">
    <property type="entry name" value="PRK04192.1"/>
    <property type="match status" value="1"/>
</dbReference>
<dbReference type="PANTHER" id="PTHR43607:SF1">
    <property type="entry name" value="H(+)-TRANSPORTING TWO-SECTOR ATPASE"/>
    <property type="match status" value="1"/>
</dbReference>
<dbReference type="PANTHER" id="PTHR43607">
    <property type="entry name" value="V-TYPE PROTON ATPASE CATALYTIC SUBUNIT A"/>
    <property type="match status" value="1"/>
</dbReference>
<dbReference type="Pfam" id="PF00006">
    <property type="entry name" value="ATP-synt_ab"/>
    <property type="match status" value="1"/>
</dbReference>
<dbReference type="Pfam" id="PF02874">
    <property type="entry name" value="ATP-synt_ab_N"/>
    <property type="match status" value="1"/>
</dbReference>
<dbReference type="Pfam" id="PF16886">
    <property type="entry name" value="ATP-synt_ab_Xtn"/>
    <property type="match status" value="1"/>
</dbReference>
<dbReference type="Pfam" id="PF22919">
    <property type="entry name" value="ATP-synt_VA_C"/>
    <property type="match status" value="1"/>
</dbReference>
<dbReference type="SUPFAM" id="SSF47917">
    <property type="entry name" value="C-terminal domain of alpha and beta subunits of F1 ATP synthase"/>
    <property type="match status" value="1"/>
</dbReference>
<dbReference type="SUPFAM" id="SSF50615">
    <property type="entry name" value="N-terminal domain of alpha and beta subunits of F1 ATP synthase"/>
    <property type="match status" value="1"/>
</dbReference>
<dbReference type="SUPFAM" id="SSF52540">
    <property type="entry name" value="P-loop containing nucleoside triphosphate hydrolases"/>
    <property type="match status" value="1"/>
</dbReference>
<proteinExistence type="inferred from homology"/>
<keyword id="KW-0066">ATP synthesis</keyword>
<keyword id="KW-0067">ATP-binding</keyword>
<keyword id="KW-0375">Hydrogen ion transport</keyword>
<keyword id="KW-0406">Ion transport</keyword>
<keyword id="KW-0547">Nucleotide-binding</keyword>
<keyword id="KW-1278">Translocase</keyword>
<keyword id="KW-0813">Transport</keyword>
<feature type="chain" id="PRO_1000115636" description="V-type ATP synthase alpha chain">
    <location>
        <begin position="1"/>
        <end position="592"/>
    </location>
</feature>
<feature type="binding site" evidence="1">
    <location>
        <begin position="232"/>
        <end position="239"/>
    </location>
    <ligand>
        <name>ATP</name>
        <dbReference type="ChEBI" id="CHEBI:30616"/>
    </ligand>
</feature>
<name>VATA_CLOBA</name>
<organism>
    <name type="scientific">Clostridium botulinum (strain Alaska E43 / Type E3)</name>
    <dbReference type="NCBI Taxonomy" id="508767"/>
    <lineage>
        <taxon>Bacteria</taxon>
        <taxon>Bacillati</taxon>
        <taxon>Bacillota</taxon>
        <taxon>Clostridia</taxon>
        <taxon>Eubacteriales</taxon>
        <taxon>Clostridiaceae</taxon>
        <taxon>Clostridium</taxon>
    </lineage>
</organism>
<evidence type="ECO:0000255" key="1">
    <source>
        <dbReference type="HAMAP-Rule" id="MF_00309"/>
    </source>
</evidence>
<accession>B2UWY4</accession>
<comment type="function">
    <text evidence="1">Produces ATP from ADP in the presence of a proton gradient across the membrane. The V-type alpha chain is a catalytic subunit.</text>
</comment>
<comment type="catalytic activity">
    <reaction evidence="1">
        <text>ATP + H2O + 4 H(+)(in) = ADP + phosphate + 5 H(+)(out)</text>
        <dbReference type="Rhea" id="RHEA:57720"/>
        <dbReference type="ChEBI" id="CHEBI:15377"/>
        <dbReference type="ChEBI" id="CHEBI:15378"/>
        <dbReference type="ChEBI" id="CHEBI:30616"/>
        <dbReference type="ChEBI" id="CHEBI:43474"/>
        <dbReference type="ChEBI" id="CHEBI:456216"/>
        <dbReference type="EC" id="7.1.2.2"/>
    </reaction>
</comment>
<comment type="similarity">
    <text evidence="1">Belongs to the ATPase alpha/beta chains family.</text>
</comment>
<protein>
    <recommendedName>
        <fullName evidence="1">V-type ATP synthase alpha chain</fullName>
        <ecNumber evidence="1">7.1.2.2</ecNumber>
    </recommendedName>
    <alternativeName>
        <fullName evidence="1">V-ATPase subunit A</fullName>
    </alternativeName>
</protein>